<evidence type="ECO:0000255" key="1">
    <source>
        <dbReference type="HAMAP-Rule" id="MF_01371"/>
    </source>
</evidence>
<evidence type="ECO:0000305" key="2"/>
<keyword id="KW-1185">Reference proteome</keyword>
<keyword id="KW-0687">Ribonucleoprotein</keyword>
<keyword id="KW-0689">Ribosomal protein</keyword>
<reference key="1">
    <citation type="journal article" date="2011" name="Stand. Genomic Sci.">
        <title>Complete genome sequence of 'Thioalkalivibrio sulfidophilus' HL-EbGr7.</title>
        <authorList>
            <person name="Muyzer G."/>
            <person name="Sorokin D.Y."/>
            <person name="Mavromatis K."/>
            <person name="Lapidus A."/>
            <person name="Clum A."/>
            <person name="Ivanova N."/>
            <person name="Pati A."/>
            <person name="d'Haeseleer P."/>
            <person name="Woyke T."/>
            <person name="Kyrpides N.C."/>
        </authorList>
    </citation>
    <scope>NUCLEOTIDE SEQUENCE [LARGE SCALE GENOMIC DNA]</scope>
    <source>
        <strain>HL-EbGR7</strain>
    </source>
</reference>
<name>RL30_THISH</name>
<proteinExistence type="inferred from homology"/>
<organism>
    <name type="scientific">Thioalkalivibrio sulfidiphilus (strain HL-EbGR7)</name>
    <dbReference type="NCBI Taxonomy" id="396588"/>
    <lineage>
        <taxon>Bacteria</taxon>
        <taxon>Pseudomonadati</taxon>
        <taxon>Pseudomonadota</taxon>
        <taxon>Gammaproteobacteria</taxon>
        <taxon>Chromatiales</taxon>
        <taxon>Ectothiorhodospiraceae</taxon>
        <taxon>Thioalkalivibrio</taxon>
    </lineage>
</organism>
<dbReference type="EMBL" id="CP001339">
    <property type="protein sequence ID" value="ACL73386.1"/>
    <property type="molecule type" value="Genomic_DNA"/>
</dbReference>
<dbReference type="RefSeq" id="WP_012638862.1">
    <property type="nucleotide sequence ID" value="NC_011901.1"/>
</dbReference>
<dbReference type="SMR" id="B8GV40"/>
<dbReference type="STRING" id="396588.Tgr7_2306"/>
<dbReference type="KEGG" id="tgr:Tgr7_2306"/>
<dbReference type="eggNOG" id="COG1841">
    <property type="taxonomic scope" value="Bacteria"/>
</dbReference>
<dbReference type="HOGENOM" id="CLU_131047_1_4_6"/>
<dbReference type="OrthoDB" id="9812790at2"/>
<dbReference type="Proteomes" id="UP000002383">
    <property type="component" value="Chromosome"/>
</dbReference>
<dbReference type="GO" id="GO:0022625">
    <property type="term" value="C:cytosolic large ribosomal subunit"/>
    <property type="evidence" value="ECO:0007669"/>
    <property type="project" value="TreeGrafter"/>
</dbReference>
<dbReference type="GO" id="GO:0003735">
    <property type="term" value="F:structural constituent of ribosome"/>
    <property type="evidence" value="ECO:0007669"/>
    <property type="project" value="InterPro"/>
</dbReference>
<dbReference type="GO" id="GO:0006412">
    <property type="term" value="P:translation"/>
    <property type="evidence" value="ECO:0007669"/>
    <property type="project" value="UniProtKB-UniRule"/>
</dbReference>
<dbReference type="CDD" id="cd01658">
    <property type="entry name" value="Ribosomal_L30"/>
    <property type="match status" value="1"/>
</dbReference>
<dbReference type="FunFam" id="3.30.1390.20:FF:000001">
    <property type="entry name" value="50S ribosomal protein L30"/>
    <property type="match status" value="1"/>
</dbReference>
<dbReference type="Gene3D" id="3.30.1390.20">
    <property type="entry name" value="Ribosomal protein L30, ferredoxin-like fold domain"/>
    <property type="match status" value="1"/>
</dbReference>
<dbReference type="HAMAP" id="MF_01371_B">
    <property type="entry name" value="Ribosomal_uL30_B"/>
    <property type="match status" value="1"/>
</dbReference>
<dbReference type="InterPro" id="IPR036919">
    <property type="entry name" value="Ribo_uL30_ferredoxin-like_sf"/>
</dbReference>
<dbReference type="InterPro" id="IPR005996">
    <property type="entry name" value="Ribosomal_uL30_bac-type"/>
</dbReference>
<dbReference type="InterPro" id="IPR016082">
    <property type="entry name" value="Ribosomal_uL30_ferredoxin-like"/>
</dbReference>
<dbReference type="NCBIfam" id="TIGR01308">
    <property type="entry name" value="rpmD_bact"/>
    <property type="match status" value="1"/>
</dbReference>
<dbReference type="PANTHER" id="PTHR15892:SF2">
    <property type="entry name" value="LARGE RIBOSOMAL SUBUNIT PROTEIN UL30M"/>
    <property type="match status" value="1"/>
</dbReference>
<dbReference type="PANTHER" id="PTHR15892">
    <property type="entry name" value="MITOCHONDRIAL RIBOSOMAL PROTEIN L30"/>
    <property type="match status" value="1"/>
</dbReference>
<dbReference type="Pfam" id="PF00327">
    <property type="entry name" value="Ribosomal_L30"/>
    <property type="match status" value="1"/>
</dbReference>
<dbReference type="PIRSF" id="PIRSF002211">
    <property type="entry name" value="Ribosomal_L30_bac-type"/>
    <property type="match status" value="1"/>
</dbReference>
<dbReference type="SUPFAM" id="SSF55129">
    <property type="entry name" value="Ribosomal protein L30p/L7e"/>
    <property type="match status" value="1"/>
</dbReference>
<accession>B8GV40</accession>
<protein>
    <recommendedName>
        <fullName evidence="1">Large ribosomal subunit protein uL30</fullName>
    </recommendedName>
    <alternativeName>
        <fullName evidence="2">50S ribosomal protein L30</fullName>
    </alternativeName>
</protein>
<comment type="subunit">
    <text evidence="1">Part of the 50S ribosomal subunit.</text>
</comment>
<comment type="similarity">
    <text evidence="1">Belongs to the universal ribosomal protein uL30 family.</text>
</comment>
<feature type="chain" id="PRO_1000184168" description="Large ribosomal subunit protein uL30">
    <location>
        <begin position="1"/>
        <end position="62"/>
    </location>
</feature>
<gene>
    <name evidence="1" type="primary">rpmD</name>
    <name type="ordered locus">Tgr7_2306</name>
</gene>
<sequence>MANAKDLKVTLVRSLNGRLKAHIACVRGLGVRRIHSPVVVKDTPENRGMINKVSYMLKVEEA</sequence>